<feature type="chain" id="PRO_1000204593" description="Glycine--tRNA ligase alpha subunit">
    <location>
        <begin position="1"/>
        <end position="288"/>
    </location>
</feature>
<dbReference type="EC" id="6.1.1.14" evidence="1"/>
<dbReference type="EMBL" id="CP001612">
    <property type="protein sequence ID" value="ACP53975.1"/>
    <property type="molecule type" value="Genomic_DNA"/>
</dbReference>
<dbReference type="RefSeq" id="WP_010977874.1">
    <property type="nucleotide sequence ID" value="NC_012633.1"/>
</dbReference>
<dbReference type="SMR" id="C3PLY5"/>
<dbReference type="KEGG" id="raf:RAF_ORF1204"/>
<dbReference type="HOGENOM" id="CLU_057066_1_0_5"/>
<dbReference type="Proteomes" id="UP000002305">
    <property type="component" value="Chromosome"/>
</dbReference>
<dbReference type="GO" id="GO:0005829">
    <property type="term" value="C:cytosol"/>
    <property type="evidence" value="ECO:0007669"/>
    <property type="project" value="TreeGrafter"/>
</dbReference>
<dbReference type="GO" id="GO:0005524">
    <property type="term" value="F:ATP binding"/>
    <property type="evidence" value="ECO:0007669"/>
    <property type="project" value="UniProtKB-UniRule"/>
</dbReference>
<dbReference type="GO" id="GO:0004820">
    <property type="term" value="F:glycine-tRNA ligase activity"/>
    <property type="evidence" value="ECO:0007669"/>
    <property type="project" value="UniProtKB-UniRule"/>
</dbReference>
<dbReference type="GO" id="GO:0006426">
    <property type="term" value="P:glycyl-tRNA aminoacylation"/>
    <property type="evidence" value="ECO:0007669"/>
    <property type="project" value="UniProtKB-UniRule"/>
</dbReference>
<dbReference type="FunFam" id="3.30.930.10:FF:000006">
    <property type="entry name" value="Glycine--tRNA ligase alpha subunit"/>
    <property type="match status" value="1"/>
</dbReference>
<dbReference type="Gene3D" id="3.30.930.10">
    <property type="entry name" value="Bira Bifunctional Protein, Domain 2"/>
    <property type="match status" value="1"/>
</dbReference>
<dbReference type="Gene3D" id="1.20.58.180">
    <property type="entry name" value="Class II aaRS and biotin synthetases, domain 2"/>
    <property type="match status" value="1"/>
</dbReference>
<dbReference type="HAMAP" id="MF_00254">
    <property type="entry name" value="Gly_tRNA_synth_alpha"/>
    <property type="match status" value="1"/>
</dbReference>
<dbReference type="InterPro" id="IPR045864">
    <property type="entry name" value="aa-tRNA-synth_II/BPL/LPL"/>
</dbReference>
<dbReference type="InterPro" id="IPR006194">
    <property type="entry name" value="Gly-tRNA-synth_heterodimer"/>
</dbReference>
<dbReference type="InterPro" id="IPR002310">
    <property type="entry name" value="Gly-tRNA_ligase_asu"/>
</dbReference>
<dbReference type="NCBIfam" id="TIGR00388">
    <property type="entry name" value="glyQ"/>
    <property type="match status" value="1"/>
</dbReference>
<dbReference type="NCBIfam" id="NF006827">
    <property type="entry name" value="PRK09348.1"/>
    <property type="match status" value="1"/>
</dbReference>
<dbReference type="PANTHER" id="PTHR30075:SF2">
    <property type="entry name" value="GLYCINE--TRNA LIGASE, CHLOROPLASTIC_MITOCHONDRIAL 2"/>
    <property type="match status" value="1"/>
</dbReference>
<dbReference type="PANTHER" id="PTHR30075">
    <property type="entry name" value="GLYCYL-TRNA SYNTHETASE"/>
    <property type="match status" value="1"/>
</dbReference>
<dbReference type="Pfam" id="PF02091">
    <property type="entry name" value="tRNA-synt_2e"/>
    <property type="match status" value="1"/>
</dbReference>
<dbReference type="PRINTS" id="PR01044">
    <property type="entry name" value="TRNASYNTHGA"/>
</dbReference>
<dbReference type="SUPFAM" id="SSF55681">
    <property type="entry name" value="Class II aaRS and biotin synthetases"/>
    <property type="match status" value="1"/>
</dbReference>
<dbReference type="PROSITE" id="PS50861">
    <property type="entry name" value="AA_TRNA_LIGASE_II_GLYAB"/>
    <property type="match status" value="1"/>
</dbReference>
<gene>
    <name evidence="1" type="primary">glyQ</name>
    <name type="ordered locus">RAF_ORF1204</name>
</gene>
<accession>C3PLY5</accession>
<evidence type="ECO:0000255" key="1">
    <source>
        <dbReference type="HAMAP-Rule" id="MF_00254"/>
    </source>
</evidence>
<comment type="catalytic activity">
    <reaction evidence="1">
        <text>tRNA(Gly) + glycine + ATP = glycyl-tRNA(Gly) + AMP + diphosphate</text>
        <dbReference type="Rhea" id="RHEA:16013"/>
        <dbReference type="Rhea" id="RHEA-COMP:9664"/>
        <dbReference type="Rhea" id="RHEA-COMP:9683"/>
        <dbReference type="ChEBI" id="CHEBI:30616"/>
        <dbReference type="ChEBI" id="CHEBI:33019"/>
        <dbReference type="ChEBI" id="CHEBI:57305"/>
        <dbReference type="ChEBI" id="CHEBI:78442"/>
        <dbReference type="ChEBI" id="CHEBI:78522"/>
        <dbReference type="ChEBI" id="CHEBI:456215"/>
        <dbReference type="EC" id="6.1.1.14"/>
    </reaction>
</comment>
<comment type="subunit">
    <text evidence="1">Tetramer of two alpha and two beta subunits.</text>
</comment>
<comment type="subcellular location">
    <subcellularLocation>
        <location evidence="1">Cytoplasm</location>
    </subcellularLocation>
</comment>
<comment type="similarity">
    <text evidence="1">Belongs to the class-II aminoacyl-tRNA synthetase family.</text>
</comment>
<proteinExistence type="inferred from homology"/>
<sequence length="288" mass="33027">MKKLSFQQIILTLQNYWQDYGCAILQPYDAHVGAGTFHPATVLRCLGTKPWSVAYVQPSRRPGDSRYGMHPNRMQHYYQFQVILKPSPDNIQELYLKSLECLGIDLKIHDIRFVEDDWESPTLGAAGLGWEVWCNGMEVSQFTYMQQIGGIECRPVAGEITYGLERLALYIQGVDEVRELDWSGQVGEKALKYGEVDFEAEGQFSKYNLELADSEMLLRHFKDSEDQCERLIKANLPMPAYDECLKASHAFNQLNALGVISVTERASYVLRVRHLARICCTKWLEMNK</sequence>
<reference key="1">
    <citation type="journal article" date="2009" name="BMC Genomics">
        <title>Analysis of the Rickettsia africae genome reveals that virulence acquisition in Rickettsia species may be explained by genome reduction.</title>
        <authorList>
            <person name="Fournier P.-E."/>
            <person name="El Karkouri K."/>
            <person name="Leroy Q."/>
            <person name="Robert C."/>
            <person name="Giumelli B."/>
            <person name="Renesto P."/>
            <person name="Socolovschi C."/>
            <person name="Parola P."/>
            <person name="Audic S."/>
            <person name="Raoult D."/>
        </authorList>
    </citation>
    <scope>NUCLEOTIDE SEQUENCE [LARGE SCALE GENOMIC DNA]</scope>
    <source>
        <strain>ESF-5</strain>
    </source>
</reference>
<name>SYGA_RICAE</name>
<organism>
    <name type="scientific">Rickettsia africae (strain ESF-5)</name>
    <dbReference type="NCBI Taxonomy" id="347255"/>
    <lineage>
        <taxon>Bacteria</taxon>
        <taxon>Pseudomonadati</taxon>
        <taxon>Pseudomonadota</taxon>
        <taxon>Alphaproteobacteria</taxon>
        <taxon>Rickettsiales</taxon>
        <taxon>Rickettsiaceae</taxon>
        <taxon>Rickettsieae</taxon>
        <taxon>Rickettsia</taxon>
        <taxon>spotted fever group</taxon>
    </lineage>
</organism>
<protein>
    <recommendedName>
        <fullName evidence="1">Glycine--tRNA ligase alpha subunit</fullName>
        <ecNumber evidence="1">6.1.1.14</ecNumber>
    </recommendedName>
    <alternativeName>
        <fullName evidence="1">Glycyl-tRNA synthetase alpha subunit</fullName>
        <shortName evidence="1">GlyRS</shortName>
    </alternativeName>
</protein>
<keyword id="KW-0030">Aminoacyl-tRNA synthetase</keyword>
<keyword id="KW-0067">ATP-binding</keyword>
<keyword id="KW-0963">Cytoplasm</keyword>
<keyword id="KW-0436">Ligase</keyword>
<keyword id="KW-0547">Nucleotide-binding</keyword>
<keyword id="KW-0648">Protein biosynthesis</keyword>